<evidence type="ECO:0000250" key="1"/>
<evidence type="ECO:0000255" key="2">
    <source>
        <dbReference type="HAMAP-Rule" id="MF_00100"/>
    </source>
</evidence>
<sequence>MVEKTSKPSAKTEVAPPVKIIELGAAVSVKELADSLETNPVEVIKALMRKGIMANINQVIDFDIAKGVIEAAGFEAKLKILKKSAAKKASPAKEKLSNFPLRPPVVTIMGHVDHGKTRLLDAIRSTNVMEKEVGGITQHIGAYQVEIKGHKITFLDTPGHEAFTAMRARGAQATDITILVVAADDGVMPQTLEALDHAKAAGVPIILAINKMDKPEANPDRVKQQLAEVGLVVEEWGGDTLAIPTSARENKGINELLEAVLLIAELEDLRADPNQPASGVVIEAEMDKTKGPMATVLVQSGTLKLGDTVVAGNTWGRVKAMFNDVGKRIKKAEPSTPVALLGMESVPQVGDKIIAVATEKQARDMVNENSQSTRKTNAVSLTNVYDQVSQGNIKELNIILKTDVQGSLEPIKDSLEKLSTDKIKININRSGAGNVTESDVMLAMASGGLIIGFSTGIETNAQRLADAEDIDIRHYDIIYKLIEDVDKALQGLLEPTIKEVIDGRAEVRAVFESTKKLSIAGCMVLEGKLVKNSQVRLLRGGEVIVDAPSNSLRRFKEDVKEVVAGYECGVGLKDFNEFQKSDILEFYHKEKSR</sequence>
<name>IF2_DEHMC</name>
<protein>
    <recommendedName>
        <fullName evidence="2">Translation initiation factor IF-2</fullName>
    </recommendedName>
</protein>
<proteinExistence type="inferred from homology"/>
<gene>
    <name evidence="2" type="primary">infB</name>
    <name type="ordered locus">cbdbA947</name>
</gene>
<dbReference type="EMBL" id="AJ965256">
    <property type="protein sequence ID" value="CAI83073.1"/>
    <property type="molecule type" value="Genomic_DNA"/>
</dbReference>
<dbReference type="RefSeq" id="WP_011309424.1">
    <property type="nucleotide sequence ID" value="NC_007356.1"/>
</dbReference>
<dbReference type="SMR" id="Q3ZXU3"/>
<dbReference type="KEGG" id="deh:cbdbA947"/>
<dbReference type="HOGENOM" id="CLU_006301_5_1_0"/>
<dbReference type="Proteomes" id="UP000000433">
    <property type="component" value="Chromosome"/>
</dbReference>
<dbReference type="GO" id="GO:0005829">
    <property type="term" value="C:cytosol"/>
    <property type="evidence" value="ECO:0007669"/>
    <property type="project" value="TreeGrafter"/>
</dbReference>
<dbReference type="GO" id="GO:0005525">
    <property type="term" value="F:GTP binding"/>
    <property type="evidence" value="ECO:0007669"/>
    <property type="project" value="UniProtKB-KW"/>
</dbReference>
<dbReference type="GO" id="GO:0003924">
    <property type="term" value="F:GTPase activity"/>
    <property type="evidence" value="ECO:0007669"/>
    <property type="project" value="UniProtKB-UniRule"/>
</dbReference>
<dbReference type="GO" id="GO:0003743">
    <property type="term" value="F:translation initiation factor activity"/>
    <property type="evidence" value="ECO:0007669"/>
    <property type="project" value="UniProtKB-UniRule"/>
</dbReference>
<dbReference type="CDD" id="cd01887">
    <property type="entry name" value="IF2_eIF5B"/>
    <property type="match status" value="1"/>
</dbReference>
<dbReference type="CDD" id="cd03702">
    <property type="entry name" value="IF2_mtIF2_II"/>
    <property type="match status" value="1"/>
</dbReference>
<dbReference type="CDD" id="cd03692">
    <property type="entry name" value="mtIF2_IVc"/>
    <property type="match status" value="1"/>
</dbReference>
<dbReference type="FunFam" id="2.40.30.10:FF:000007">
    <property type="entry name" value="Translation initiation factor IF-2"/>
    <property type="match status" value="1"/>
</dbReference>
<dbReference type="FunFam" id="2.40.30.10:FF:000008">
    <property type="entry name" value="Translation initiation factor IF-2"/>
    <property type="match status" value="1"/>
</dbReference>
<dbReference type="FunFam" id="3.40.50.10050:FF:000001">
    <property type="entry name" value="Translation initiation factor IF-2"/>
    <property type="match status" value="1"/>
</dbReference>
<dbReference type="FunFam" id="3.40.50.300:FF:000019">
    <property type="entry name" value="Translation initiation factor IF-2"/>
    <property type="match status" value="1"/>
</dbReference>
<dbReference type="Gene3D" id="3.40.50.300">
    <property type="entry name" value="P-loop containing nucleotide triphosphate hydrolases"/>
    <property type="match status" value="1"/>
</dbReference>
<dbReference type="Gene3D" id="2.40.30.10">
    <property type="entry name" value="Translation factors"/>
    <property type="match status" value="2"/>
</dbReference>
<dbReference type="Gene3D" id="3.40.50.10050">
    <property type="entry name" value="Translation initiation factor IF- 2, domain 3"/>
    <property type="match status" value="1"/>
</dbReference>
<dbReference type="HAMAP" id="MF_00100_B">
    <property type="entry name" value="IF_2_B"/>
    <property type="match status" value="1"/>
</dbReference>
<dbReference type="InterPro" id="IPR053905">
    <property type="entry name" value="EF-G-like_DII"/>
</dbReference>
<dbReference type="InterPro" id="IPR044145">
    <property type="entry name" value="IF2_II"/>
</dbReference>
<dbReference type="InterPro" id="IPR006847">
    <property type="entry name" value="IF2_N"/>
</dbReference>
<dbReference type="InterPro" id="IPR027417">
    <property type="entry name" value="P-loop_NTPase"/>
</dbReference>
<dbReference type="InterPro" id="IPR005225">
    <property type="entry name" value="Small_GTP-bd"/>
</dbReference>
<dbReference type="InterPro" id="IPR000795">
    <property type="entry name" value="T_Tr_GTP-bd_dom"/>
</dbReference>
<dbReference type="InterPro" id="IPR000178">
    <property type="entry name" value="TF_IF2_bacterial-like"/>
</dbReference>
<dbReference type="InterPro" id="IPR015760">
    <property type="entry name" value="TIF_IF2"/>
</dbReference>
<dbReference type="InterPro" id="IPR023115">
    <property type="entry name" value="TIF_IF2_dom3"/>
</dbReference>
<dbReference type="InterPro" id="IPR036925">
    <property type="entry name" value="TIF_IF2_dom3_sf"/>
</dbReference>
<dbReference type="InterPro" id="IPR009000">
    <property type="entry name" value="Transl_B-barrel_sf"/>
</dbReference>
<dbReference type="NCBIfam" id="TIGR00487">
    <property type="entry name" value="IF-2"/>
    <property type="match status" value="1"/>
</dbReference>
<dbReference type="NCBIfam" id="TIGR00231">
    <property type="entry name" value="small_GTP"/>
    <property type="match status" value="1"/>
</dbReference>
<dbReference type="PANTHER" id="PTHR43381:SF5">
    <property type="entry name" value="TR-TYPE G DOMAIN-CONTAINING PROTEIN"/>
    <property type="match status" value="1"/>
</dbReference>
<dbReference type="PANTHER" id="PTHR43381">
    <property type="entry name" value="TRANSLATION INITIATION FACTOR IF-2-RELATED"/>
    <property type="match status" value="1"/>
</dbReference>
<dbReference type="Pfam" id="PF22042">
    <property type="entry name" value="EF-G_D2"/>
    <property type="match status" value="1"/>
</dbReference>
<dbReference type="Pfam" id="PF00009">
    <property type="entry name" value="GTP_EFTU"/>
    <property type="match status" value="1"/>
</dbReference>
<dbReference type="Pfam" id="PF11987">
    <property type="entry name" value="IF-2"/>
    <property type="match status" value="1"/>
</dbReference>
<dbReference type="Pfam" id="PF04760">
    <property type="entry name" value="IF2_N"/>
    <property type="match status" value="1"/>
</dbReference>
<dbReference type="SUPFAM" id="SSF52156">
    <property type="entry name" value="Initiation factor IF2/eIF5b, domain 3"/>
    <property type="match status" value="1"/>
</dbReference>
<dbReference type="SUPFAM" id="SSF52540">
    <property type="entry name" value="P-loop containing nucleoside triphosphate hydrolases"/>
    <property type="match status" value="1"/>
</dbReference>
<dbReference type="SUPFAM" id="SSF50447">
    <property type="entry name" value="Translation proteins"/>
    <property type="match status" value="2"/>
</dbReference>
<dbReference type="PROSITE" id="PS51722">
    <property type="entry name" value="G_TR_2"/>
    <property type="match status" value="1"/>
</dbReference>
<comment type="function">
    <text evidence="2">One of the essential components for the initiation of protein synthesis. Protects formylmethionyl-tRNA from spontaneous hydrolysis and promotes its binding to the 30S ribosomal subunits. Also involved in the hydrolysis of GTP during the formation of the 70S ribosomal complex.</text>
</comment>
<comment type="subcellular location">
    <subcellularLocation>
        <location evidence="2">Cytoplasm</location>
    </subcellularLocation>
</comment>
<comment type="similarity">
    <text evidence="2">Belongs to the TRAFAC class translation factor GTPase superfamily. Classic translation factor GTPase family. IF-2 subfamily.</text>
</comment>
<accession>Q3ZXU3</accession>
<organism>
    <name type="scientific">Dehalococcoides mccartyi (strain CBDB1)</name>
    <dbReference type="NCBI Taxonomy" id="255470"/>
    <lineage>
        <taxon>Bacteria</taxon>
        <taxon>Bacillati</taxon>
        <taxon>Chloroflexota</taxon>
        <taxon>Dehalococcoidia</taxon>
        <taxon>Dehalococcoidales</taxon>
        <taxon>Dehalococcoidaceae</taxon>
        <taxon>Dehalococcoides</taxon>
    </lineage>
</organism>
<feature type="chain" id="PRO_0000228190" description="Translation initiation factor IF-2">
    <location>
        <begin position="1"/>
        <end position="593"/>
    </location>
</feature>
<feature type="domain" description="tr-type G">
    <location>
        <begin position="101"/>
        <end position="270"/>
    </location>
</feature>
<feature type="region of interest" description="G1" evidence="1">
    <location>
        <begin position="110"/>
        <end position="117"/>
    </location>
</feature>
<feature type="region of interest" description="G2" evidence="1">
    <location>
        <begin position="135"/>
        <end position="139"/>
    </location>
</feature>
<feature type="region of interest" description="G3" evidence="1">
    <location>
        <begin position="156"/>
        <end position="159"/>
    </location>
</feature>
<feature type="region of interest" description="G4" evidence="1">
    <location>
        <begin position="210"/>
        <end position="213"/>
    </location>
</feature>
<feature type="region of interest" description="G5" evidence="1">
    <location>
        <begin position="246"/>
        <end position="248"/>
    </location>
</feature>
<feature type="binding site" evidence="2">
    <location>
        <begin position="110"/>
        <end position="117"/>
    </location>
    <ligand>
        <name>GTP</name>
        <dbReference type="ChEBI" id="CHEBI:37565"/>
    </ligand>
</feature>
<feature type="binding site" evidence="2">
    <location>
        <begin position="156"/>
        <end position="160"/>
    </location>
    <ligand>
        <name>GTP</name>
        <dbReference type="ChEBI" id="CHEBI:37565"/>
    </ligand>
</feature>
<feature type="binding site" evidence="2">
    <location>
        <begin position="210"/>
        <end position="213"/>
    </location>
    <ligand>
        <name>GTP</name>
        <dbReference type="ChEBI" id="CHEBI:37565"/>
    </ligand>
</feature>
<reference key="1">
    <citation type="journal article" date="2005" name="Nat. Biotechnol.">
        <title>Genome sequence of the chlorinated compound-respiring bacterium Dehalococcoides species strain CBDB1.</title>
        <authorList>
            <person name="Kube M."/>
            <person name="Beck A."/>
            <person name="Zinder S.H."/>
            <person name="Kuhl H."/>
            <person name="Reinhardt R."/>
            <person name="Adrian L."/>
        </authorList>
    </citation>
    <scope>NUCLEOTIDE SEQUENCE [LARGE SCALE GENOMIC DNA]</scope>
    <source>
        <strain>CBDB1</strain>
    </source>
</reference>
<keyword id="KW-0963">Cytoplasm</keyword>
<keyword id="KW-0342">GTP-binding</keyword>
<keyword id="KW-0396">Initiation factor</keyword>
<keyword id="KW-0547">Nucleotide-binding</keyword>
<keyword id="KW-0648">Protein biosynthesis</keyword>